<sequence>MSKHDVERLPAACGLTCPQRLGQYWQLVRGDRPIGSLLLLWPTWWALWLAADGLPPLWTLFVFTAGVWLTRSAGCVINDYADRWLDPHVERTKSRPLATGAVSGREALWVFVVLMLVAFALVFTLNWLTVLLSVPGVFLAASYPYLKRHTHLPQVYLGMAFGWGIPMAFAAVQGSVPVLGWLLYAANILWATAYDTWYAMVDRDDDIRMGSKSTAILFGRFDLVAQGILYALMFAVLALVDLRADLGAAYWAGLGVAALLVAYEFRIARHRERGPCFRAFLHNNWVGLAIFVGIAVAGR</sequence>
<proteinExistence type="inferred from homology"/>
<evidence type="ECO:0000255" key="1">
    <source>
        <dbReference type="HAMAP-Rule" id="MF_01635"/>
    </source>
</evidence>
<protein>
    <recommendedName>
        <fullName evidence="1">4-hydroxybenzoate octaprenyltransferase</fullName>
        <ecNumber evidence="1">2.5.1.39</ecNumber>
    </recommendedName>
    <alternativeName>
        <fullName evidence="1">4-HB polyprenyltransferase</fullName>
    </alternativeName>
</protein>
<accession>Q2P8F5</accession>
<keyword id="KW-0997">Cell inner membrane</keyword>
<keyword id="KW-1003">Cell membrane</keyword>
<keyword id="KW-0460">Magnesium</keyword>
<keyword id="KW-0472">Membrane</keyword>
<keyword id="KW-0808">Transferase</keyword>
<keyword id="KW-0812">Transmembrane</keyword>
<keyword id="KW-1133">Transmembrane helix</keyword>
<keyword id="KW-0831">Ubiquinone biosynthesis</keyword>
<feature type="chain" id="PRO_0000262859" description="4-hydroxybenzoate octaprenyltransferase">
    <location>
        <begin position="1"/>
        <end position="299"/>
    </location>
</feature>
<feature type="transmembrane region" description="Helical" evidence="1">
    <location>
        <begin position="34"/>
        <end position="54"/>
    </location>
</feature>
<feature type="transmembrane region" description="Helical" evidence="1">
    <location>
        <begin position="57"/>
        <end position="77"/>
    </location>
</feature>
<feature type="transmembrane region" description="Helical" evidence="1">
    <location>
        <begin position="108"/>
        <end position="128"/>
    </location>
</feature>
<feature type="transmembrane region" description="Helical" evidence="1">
    <location>
        <begin position="163"/>
        <end position="183"/>
    </location>
</feature>
<feature type="transmembrane region" description="Helical" evidence="1">
    <location>
        <begin position="221"/>
        <end position="241"/>
    </location>
</feature>
<feature type="transmembrane region" description="Helical" evidence="1">
    <location>
        <begin position="245"/>
        <end position="265"/>
    </location>
</feature>
<feature type="transmembrane region" description="Helical" evidence="1">
    <location>
        <begin position="277"/>
        <end position="297"/>
    </location>
</feature>
<name>UBIA_XANOM</name>
<gene>
    <name evidence="1" type="primary">ubiA</name>
    <name type="ordered locus">XOO0417</name>
</gene>
<comment type="function">
    <text evidence="1">Catalyzes the prenylation of para-hydroxybenzoate (PHB) with an all-trans polyprenyl group. Mediates the second step in the final reaction sequence of ubiquinone-8 (UQ-8) biosynthesis, which is the condensation of the polyisoprenoid side chain with PHB, generating the first membrane-bound Q intermediate 3-octaprenyl-4-hydroxybenzoate.</text>
</comment>
<comment type="catalytic activity">
    <reaction evidence="1">
        <text>all-trans-octaprenyl diphosphate + 4-hydroxybenzoate = 4-hydroxy-3-(all-trans-octaprenyl)benzoate + diphosphate</text>
        <dbReference type="Rhea" id="RHEA:27782"/>
        <dbReference type="ChEBI" id="CHEBI:1617"/>
        <dbReference type="ChEBI" id="CHEBI:17879"/>
        <dbReference type="ChEBI" id="CHEBI:33019"/>
        <dbReference type="ChEBI" id="CHEBI:57711"/>
        <dbReference type="EC" id="2.5.1.39"/>
    </reaction>
</comment>
<comment type="cofactor">
    <cofactor evidence="1">
        <name>Mg(2+)</name>
        <dbReference type="ChEBI" id="CHEBI:18420"/>
    </cofactor>
</comment>
<comment type="pathway">
    <text evidence="1">Cofactor biosynthesis; ubiquinone biosynthesis.</text>
</comment>
<comment type="subcellular location">
    <subcellularLocation>
        <location evidence="1">Cell inner membrane</location>
        <topology evidence="1">Multi-pass membrane protein</topology>
    </subcellularLocation>
</comment>
<comment type="similarity">
    <text evidence="1">Belongs to the UbiA prenyltransferase family.</text>
</comment>
<organism>
    <name type="scientific">Xanthomonas oryzae pv. oryzae (strain MAFF 311018)</name>
    <dbReference type="NCBI Taxonomy" id="342109"/>
    <lineage>
        <taxon>Bacteria</taxon>
        <taxon>Pseudomonadati</taxon>
        <taxon>Pseudomonadota</taxon>
        <taxon>Gammaproteobacteria</taxon>
        <taxon>Lysobacterales</taxon>
        <taxon>Lysobacteraceae</taxon>
        <taxon>Xanthomonas</taxon>
    </lineage>
</organism>
<dbReference type="EC" id="2.5.1.39" evidence="1"/>
<dbReference type="EMBL" id="AP008229">
    <property type="protein sequence ID" value="BAE67172.1"/>
    <property type="molecule type" value="Genomic_DNA"/>
</dbReference>
<dbReference type="RefSeq" id="WP_011257385.1">
    <property type="nucleotide sequence ID" value="NC_007705.1"/>
</dbReference>
<dbReference type="SMR" id="Q2P8F5"/>
<dbReference type="KEGG" id="xom:XOO0417"/>
<dbReference type="HOGENOM" id="CLU_034879_1_0_6"/>
<dbReference type="UniPathway" id="UPA00232"/>
<dbReference type="GO" id="GO:0005886">
    <property type="term" value="C:plasma membrane"/>
    <property type="evidence" value="ECO:0007669"/>
    <property type="project" value="UniProtKB-SubCell"/>
</dbReference>
<dbReference type="GO" id="GO:0008412">
    <property type="term" value="F:4-hydroxybenzoate polyprenyltransferase activity"/>
    <property type="evidence" value="ECO:0007669"/>
    <property type="project" value="UniProtKB-UniRule"/>
</dbReference>
<dbReference type="GO" id="GO:0006744">
    <property type="term" value="P:ubiquinone biosynthetic process"/>
    <property type="evidence" value="ECO:0007669"/>
    <property type="project" value="UniProtKB-UniRule"/>
</dbReference>
<dbReference type="CDD" id="cd13959">
    <property type="entry name" value="PT_UbiA_COQ2"/>
    <property type="match status" value="1"/>
</dbReference>
<dbReference type="FunFam" id="1.10.357.140:FF:000002">
    <property type="entry name" value="4-hydroxybenzoate octaprenyltransferase"/>
    <property type="match status" value="1"/>
</dbReference>
<dbReference type="FunFam" id="1.20.120.1780:FF:000001">
    <property type="entry name" value="4-hydroxybenzoate octaprenyltransferase"/>
    <property type="match status" value="1"/>
</dbReference>
<dbReference type="Gene3D" id="1.10.357.140">
    <property type="entry name" value="UbiA prenyltransferase"/>
    <property type="match status" value="1"/>
</dbReference>
<dbReference type="Gene3D" id="1.20.120.1780">
    <property type="entry name" value="UbiA prenyltransferase"/>
    <property type="match status" value="1"/>
</dbReference>
<dbReference type="HAMAP" id="MF_01635">
    <property type="entry name" value="UbiA"/>
    <property type="match status" value="1"/>
</dbReference>
<dbReference type="InterPro" id="IPR006370">
    <property type="entry name" value="HB_polyprenyltransferase-like"/>
</dbReference>
<dbReference type="InterPro" id="IPR039653">
    <property type="entry name" value="Prenyltransferase"/>
</dbReference>
<dbReference type="InterPro" id="IPR000537">
    <property type="entry name" value="UbiA_prenyltransferase"/>
</dbReference>
<dbReference type="InterPro" id="IPR030470">
    <property type="entry name" value="UbiA_prenylTrfase_CS"/>
</dbReference>
<dbReference type="InterPro" id="IPR044878">
    <property type="entry name" value="UbiA_sf"/>
</dbReference>
<dbReference type="NCBIfam" id="TIGR01474">
    <property type="entry name" value="ubiA_proteo"/>
    <property type="match status" value="1"/>
</dbReference>
<dbReference type="PANTHER" id="PTHR11048:SF28">
    <property type="entry name" value="4-HYDROXYBENZOATE POLYPRENYLTRANSFERASE, MITOCHONDRIAL"/>
    <property type="match status" value="1"/>
</dbReference>
<dbReference type="PANTHER" id="PTHR11048">
    <property type="entry name" value="PRENYLTRANSFERASES"/>
    <property type="match status" value="1"/>
</dbReference>
<dbReference type="Pfam" id="PF01040">
    <property type="entry name" value="UbiA"/>
    <property type="match status" value="1"/>
</dbReference>
<dbReference type="PROSITE" id="PS00943">
    <property type="entry name" value="UBIA"/>
    <property type="match status" value="1"/>
</dbReference>
<reference key="1">
    <citation type="journal article" date="2005" name="Jpn. Agric. Res. Q.">
        <title>Genome sequence of Xanthomonas oryzae pv. oryzae suggests contribution of large numbers of effector genes and insertion sequences to its race diversity.</title>
        <authorList>
            <person name="Ochiai H."/>
            <person name="Inoue Y."/>
            <person name="Takeya M."/>
            <person name="Sasaki A."/>
            <person name="Kaku H."/>
        </authorList>
    </citation>
    <scope>NUCLEOTIDE SEQUENCE [LARGE SCALE GENOMIC DNA]</scope>
    <source>
        <strain>MAFF 311018</strain>
    </source>
</reference>